<evidence type="ECO:0000250" key="1">
    <source>
        <dbReference type="UniProtKB" id="Q02230"/>
    </source>
</evidence>
<evidence type="ECO:0000256" key="2">
    <source>
        <dbReference type="SAM" id="MobiDB-lite"/>
    </source>
</evidence>
<evidence type="ECO:0000269" key="3">
    <source>
    </source>
</evidence>
<evidence type="ECO:0000269" key="4">
    <source>
    </source>
</evidence>
<evidence type="ECO:0000269" key="5">
    <source>
    </source>
</evidence>
<evidence type="ECO:0000269" key="6">
    <source>
    </source>
</evidence>
<evidence type="ECO:0000269" key="7">
    <source>
    </source>
</evidence>
<evidence type="ECO:0000269" key="8">
    <source>
    </source>
</evidence>
<evidence type="ECO:0000269" key="9">
    <source>
    </source>
</evidence>
<evidence type="ECO:0000303" key="10">
    <source>
    </source>
</evidence>
<evidence type="ECO:0000303" key="11">
    <source>
    </source>
</evidence>
<evidence type="ECO:0000305" key="12"/>
<evidence type="ECO:0000305" key="13">
    <source>
    </source>
</evidence>
<evidence type="ECO:0000312" key="14">
    <source>
        <dbReference type="EMBL" id="AAA98194.1"/>
    </source>
</evidence>
<evidence type="ECO:0000312" key="15">
    <source>
        <dbReference type="EMBL" id="AAG20724.1"/>
    </source>
</evidence>
<evidence type="ECO:0000312" key="16">
    <source>
        <dbReference type="EMBL" id="CAA33436.1"/>
    </source>
</evidence>
<evidence type="ECO:0000312" key="17">
    <source>
        <dbReference type="EMBL" id="CAA39172.1"/>
    </source>
</evidence>
<organism>
    <name type="scientific">Halobacterium salinarum (strain ATCC 700922 / JCM 11081 / NRC-1)</name>
    <name type="common">Halobacterium halobium</name>
    <dbReference type="NCBI Taxonomy" id="64091"/>
    <lineage>
        <taxon>Archaea</taxon>
        <taxon>Methanobacteriati</taxon>
        <taxon>Methanobacteriota</taxon>
        <taxon>Stenosarchaea group</taxon>
        <taxon>Halobacteria</taxon>
        <taxon>Halobacteriales</taxon>
        <taxon>Halobacteriaceae</taxon>
        <taxon>Halobacterium</taxon>
        <taxon>Halobacterium salinarum NRC-34001</taxon>
    </lineage>
</organism>
<geneLocation type="plasmid">
    <name>pNRC100</name>
</geneLocation>
<geneLocation type="plasmid">
    <name>pNRC200</name>
</geneLocation>
<geneLocation type="plasmid">
    <name>pHH1</name>
</geneLocation>
<reference evidence="16" key="1">
    <citation type="journal article" date="1989" name="Nucleic Acids Res.">
        <title>Analysis of insertion mutants reveals two new genes in the pNRC100 gas vesicle gene cluster of Halobacterium halobium.</title>
        <authorList>
            <person name="Jones J.G."/>
            <person name="Hackett N.R."/>
            <person name="Halladay J.T."/>
            <person name="Scothorn D.J."/>
            <person name="Yang C.-F."/>
            <person name="Ng W.-L."/>
            <person name="Dassarma S."/>
        </authorList>
    </citation>
    <scope>NUCLEOTIDE SEQUENCE [GENOMIC DNA]</scope>
    <scope>DISRUPTION PHENOTYPE</scope>
    <source>
        <strain>ATCC 700922 / JCM 11081 / NRC-1</strain>
        <plasmid>pNRC100</plasmid>
    </source>
</reference>
<reference evidence="14" key="2">
    <citation type="journal article" date="1991" name="Gene">
        <title>Structure and organization of the gas vesicle gene cluster on the Halobacterium halobium plasmid pNRC100.</title>
        <authorList>
            <person name="Jones J.G."/>
            <person name="Young D.C."/>
            <person name="Dassarma S."/>
        </authorList>
    </citation>
    <scope>NUCLEOTIDE SEQUENCE [GENOMIC DNA]</scope>
    <source>
        <strain>ATCC 700922 / JCM 11081 / NRC-1</strain>
        <plasmid>pNRC100</plasmid>
    </source>
</reference>
<reference evidence="17" key="3">
    <citation type="journal article" date="1991" name="Mol. Microbiol.">
        <title>A DNA region of 9 kbp contains all genes necessary for gas vesicle synthesis in halophilic archaebacteria.</title>
        <authorList>
            <person name="Horne M."/>
            <person name="Englert C."/>
            <person name="Wimmer C."/>
            <person name="Pfeifer F."/>
        </authorList>
    </citation>
    <scope>NUCLEOTIDE SEQUENCE [GENOMIC DNA]</scope>
    <scope>INDUCTION</scope>
    <scope>DISRUPTION PHENOTYPE</scope>
    <source>
        <strain>NRC-817</strain>
        <plasmid>pHH1</plasmid>
    </source>
</reference>
<reference key="4">
    <citation type="journal article" date="1998" name="Genome Res.">
        <title>Snapshot of a large dynamic replicon in a halophilic archaeon: megaplasmid or minichromosome?</title>
        <authorList>
            <person name="Ng W.V."/>
            <person name="Ciufo S.A."/>
            <person name="Smith T.M."/>
            <person name="Bumgarner R.E."/>
            <person name="Baskin D."/>
            <person name="Faust J."/>
            <person name="Hall B."/>
            <person name="Loretz C."/>
            <person name="Seto J."/>
            <person name="Slagel J."/>
            <person name="Hood L."/>
            <person name="DasSarma S."/>
        </authorList>
    </citation>
    <scope>NUCLEOTIDE SEQUENCE [LARGE SCALE GENOMIC DNA]</scope>
    <source>
        <strain>ATCC 700922 / JCM 11081 / NRC-1</strain>
        <plasmid>pNRC100</plasmid>
    </source>
</reference>
<reference evidence="15" key="5">
    <citation type="journal article" date="2000" name="Proc. Natl. Acad. Sci. U.S.A.">
        <title>Genome sequence of Halobacterium species NRC-1.</title>
        <authorList>
            <person name="Ng W.V."/>
            <person name="Kennedy S.P."/>
            <person name="Mahairas G.G."/>
            <person name="Berquist B."/>
            <person name="Pan M."/>
            <person name="Shukla H.D."/>
            <person name="Lasky S.R."/>
            <person name="Baliga N.S."/>
            <person name="Thorsson V."/>
            <person name="Sbrogna J."/>
            <person name="Swartzell S."/>
            <person name="Weir D."/>
            <person name="Hall J."/>
            <person name="Dahl T.A."/>
            <person name="Welti R."/>
            <person name="Goo Y.A."/>
            <person name="Leithauser B."/>
            <person name="Keller K."/>
            <person name="Cruz R."/>
            <person name="Danson M.J."/>
            <person name="Hough D.W."/>
            <person name="Maddocks D.G."/>
            <person name="Jablonski P.E."/>
            <person name="Krebs M.P."/>
            <person name="Angevine C.M."/>
            <person name="Dale H."/>
            <person name="Isenbarger T.A."/>
            <person name="Peck R.F."/>
            <person name="Pohlschroder M."/>
            <person name="Spudich J.L."/>
            <person name="Jung K.-H."/>
            <person name="Alam M."/>
            <person name="Freitas T."/>
            <person name="Hou S."/>
            <person name="Daniels C.J."/>
            <person name="Dennis P.P."/>
            <person name="Omer A.D."/>
            <person name="Ebhardt H."/>
            <person name="Lowe T.M."/>
            <person name="Liang P."/>
            <person name="Riley M."/>
            <person name="Hood L."/>
            <person name="DasSarma S."/>
        </authorList>
    </citation>
    <scope>NUCLEOTIDE SEQUENCE [LARGE SCALE GENOMIC DNA]</scope>
    <source>
        <strain>ATCC 700922 / JCM 11081 / NRC-1</strain>
        <plasmid>pNRC200</plasmid>
    </source>
</reference>
<reference key="6">
    <citation type="journal article" date="1992" name="Gene">
        <title>Genetic transformation of a halophilic archaebacterium with a gas vesicle gene cluster restores its ability to float.</title>
        <authorList>
            <person name="Halladay J.T."/>
            <person name="Ng W.L."/>
            <person name="DasSarma S."/>
        </authorList>
    </citation>
    <scope>FUNCTION</scope>
    <scope>GAS VESICLE PRODUCTION</scope>
    <source>
        <strain>ATCC 700922 / JCM 11081 / NRC-1</strain>
        <plasmid>pNRC100</plasmid>
    </source>
</reference>
<reference key="7">
    <citation type="journal article" date="1992" name="J. Mol. Biol.">
        <title>Three different but related gene clusters encoding gas vesicles in halophilic archaea.</title>
        <authorList>
            <person name="Englert C."/>
            <person name="Krueger K."/>
            <person name="Offner S."/>
            <person name="Pfeifer F."/>
        </authorList>
    </citation>
    <scope>GAS VESICLE GENE CLUSTER</scope>
    <source>
        <strain>NRC-817</strain>
        <plasmid>pHH1</plasmid>
    </source>
</reference>
<reference key="8">
    <citation type="journal article" date="1994" name="J. Bacteriol.">
        <title>Wild-type gas vesicle formation requires at least ten genes in the gvp gene cluster of Halobacterium halobium plasmid pNRC100.</title>
        <authorList>
            <person name="DasSarma S."/>
            <person name="Arora P."/>
            <person name="Lin F."/>
            <person name="Molinari E."/>
            <person name="Yin L.R."/>
        </authorList>
    </citation>
    <scope>DISRUPTION PHENOTYPE</scope>
    <source>
        <strain>ATCC 700922 / JCM 11081 / NRC-1</strain>
        <plasmid>pNRC100</plasmid>
    </source>
</reference>
<reference key="9">
    <citation type="journal article" date="1995" name="Mol. Microbiol.">
        <title>Complementation studies with the gas vesicle-encoding p-vac region of Halobacterium salinarium PHH1 reveal a regulatory role for the p-gvpDE genes.</title>
        <authorList>
            <person name="Offner S."/>
            <person name="Pfeifer F."/>
        </authorList>
    </citation>
    <scope>FUNCTION</scope>
    <scope>INDUCTION</scope>
    <scope>DISRUPTION PHENOTYPE</scope>
    <source>
        <strain>PHH1</strain>
    </source>
</reference>
<reference key="10">
    <citation type="journal article" date="1997" name="Microbiology">
        <title>Growth competition between Halobacterium salinarium strain PHH1 and mutants affected in gas vesicle synthesis.</title>
        <authorList>
            <person name="Beard S.J."/>
            <person name="Hayes P.K."/>
            <person name="Walsby A.E."/>
        </authorList>
    </citation>
    <scope>FUNCTION IN BUOYANCY</scope>
    <scope>POSSIBLE INDUCTION BY OXYGEN LIMITATION</scope>
    <source>
        <strain>PHH1</strain>
    </source>
</reference>
<reference key="11">
    <citation type="journal article" date="1998" name="J. Mol. Biol.">
        <title>The transcriptional activator GvpE for the halobacterial gas vesicle genes resembles a basic region leucine-zipper regulatory protein.</title>
        <authorList>
            <person name="Krueger K."/>
            <person name="Hermann T."/>
            <person name="Armbruster V."/>
            <person name="Pfeifer F."/>
        </authorList>
    </citation>
    <scope>DISCUSSION OF SEQUENCE</scope>
    <source>
        <strain>PHH1</strain>
    </source>
</reference>
<gene>
    <name type="primary">gvpE11</name>
    <name evidence="10" type="synonym">gvpE</name>
    <name evidence="11" type="synonym">p-gvpE</name>
    <name type="ordered locus">VNG_5028G</name>
</gene>
<gene>
    <name evidence="10 15" type="primary">gvpE1</name>
    <name evidence="15" type="ordered locus">VNG_6027G</name>
</gene>
<keyword id="KW-0963">Cytoplasm</keyword>
<keyword id="KW-0238">DNA-binding</keyword>
<keyword id="KW-0614">Plasmid</keyword>
<keyword id="KW-1185">Reference proteome</keyword>
<dbReference type="EMBL" id="X15374">
    <property type="protein sequence ID" value="CAA33436.1"/>
    <property type="molecule type" value="Genomic_DNA"/>
</dbReference>
<dbReference type="EMBL" id="M58557">
    <property type="protein sequence ID" value="AAA98194.1"/>
    <property type="molecule type" value="Genomic_DNA"/>
</dbReference>
<dbReference type="EMBL" id="X55648">
    <property type="protein sequence ID" value="CAA39172.1"/>
    <property type="molecule type" value="Genomic_DNA"/>
</dbReference>
<dbReference type="EMBL" id="AF016485">
    <property type="protein sequence ID" value="AAC82807.1"/>
    <property type="molecule type" value="Genomic_DNA"/>
</dbReference>
<dbReference type="EMBL" id="AE004438">
    <property type="protein sequence ID" value="AAG20724.1"/>
    <property type="molecule type" value="Genomic_DNA"/>
</dbReference>
<dbReference type="PIR" id="T08240">
    <property type="entry name" value="T08240"/>
</dbReference>
<dbReference type="RefSeq" id="WP_010890521.1">
    <property type="nucleotide sequence ID" value="NC_001869.1"/>
</dbReference>
<dbReference type="SMR" id="P13044"/>
<dbReference type="GeneID" id="5954620"/>
<dbReference type="KEGG" id="hal:gvpE"/>
<dbReference type="KEGG" id="hal:VNG_6027G"/>
<dbReference type="PATRIC" id="fig|64091.14.peg.2097"/>
<dbReference type="HOGENOM" id="CLU_1418666_0_0_2"/>
<dbReference type="InParanoid" id="P13044"/>
<dbReference type="OrthoDB" id="56053at2157"/>
<dbReference type="Proteomes" id="UP000000554">
    <property type="component" value="Plasmid pNRC100"/>
</dbReference>
<dbReference type="Proteomes" id="UP000000554">
    <property type="component" value="Plasmid pNRC200"/>
</dbReference>
<dbReference type="GO" id="GO:0005737">
    <property type="term" value="C:cytoplasm"/>
    <property type="evidence" value="ECO:0007669"/>
    <property type="project" value="UniProtKB-SubCell"/>
</dbReference>
<dbReference type="GO" id="GO:0003677">
    <property type="term" value="F:DNA binding"/>
    <property type="evidence" value="ECO:0007669"/>
    <property type="project" value="UniProtKB-KW"/>
</dbReference>
<dbReference type="CDD" id="cd00090">
    <property type="entry name" value="HTH_ARSR"/>
    <property type="match status" value="1"/>
</dbReference>
<dbReference type="Gene3D" id="1.10.10.10">
    <property type="entry name" value="Winged helix-like DNA-binding domain superfamily/Winged helix DNA-binding domain"/>
    <property type="match status" value="1"/>
</dbReference>
<dbReference type="InterPro" id="IPR011991">
    <property type="entry name" value="ArsR-like_HTH"/>
</dbReference>
<dbReference type="InterPro" id="IPR005149">
    <property type="entry name" value="Tscrpt_reg_PadR_N"/>
</dbReference>
<dbReference type="InterPro" id="IPR036388">
    <property type="entry name" value="WH-like_DNA-bd_sf"/>
</dbReference>
<dbReference type="InterPro" id="IPR036390">
    <property type="entry name" value="WH_DNA-bd_sf"/>
</dbReference>
<dbReference type="Pfam" id="PF03551">
    <property type="entry name" value="PadR"/>
    <property type="match status" value="1"/>
</dbReference>
<dbReference type="SUPFAM" id="SSF46785">
    <property type="entry name" value="Winged helix' DNA-binding domain"/>
    <property type="match status" value="1"/>
</dbReference>
<name>GVPE1_HALSA</name>
<proteinExistence type="evidence at protein level"/>
<sequence>MDDLLEELTADIDANAAISFAVTDLESVIESDGASDHADQPPDEGATQRYTDTPLTDDAVATMDGWLDNDQLHTISDAIVTEHIDEILLLLITVRDGACGKELLQDLRRLFGADLSPGTVYPHLNDLAVEGVLEVQKLSKRKVYRLSDPEGAFTRIDHMVDQLLLFSLVLKAVMTDCKARQSQSQGRETND</sequence>
<protein>
    <recommendedName>
        <fullName>Transcriptional activator GvpE1</fullName>
    </recommendedName>
</protein>
<accession>P13044</accession>
<accession>Q9HI20</accession>
<feature type="chain" id="PRO_0000182678" description="Transcriptional activator GvpE1">
    <location>
        <begin position="1"/>
        <end position="191"/>
    </location>
</feature>
<feature type="region of interest" description="Disordered" evidence="2">
    <location>
        <begin position="31"/>
        <end position="51"/>
    </location>
</feature>
<feature type="region of interest" description="Leucine-zipper" evidence="13">
    <location>
        <begin position="150"/>
        <end position="181"/>
    </location>
</feature>
<feature type="binding site" evidence="13">
    <location>
        <begin position="140"/>
        <end position="145"/>
    </location>
    <ligand>
        <name>DNA</name>
        <dbReference type="ChEBI" id="CHEBI:16991"/>
    </ligand>
</feature>
<comment type="function">
    <text evidence="1 7">Plays a regulatory role in gas vesicle synthesis, activates transcription of the gvpA operon, and probably of the gvpD operon (By similarity). Gas vesicles are hollow, gas filled proteinaceous nanostructures found in several microbial planktonic microorganisms. They allow positioning of halobacteria at the optimal depth for growth in the poorly aerated, shallow brine pools of their habitat (PubMed:33711860).</text>
</comment>
<comment type="function">
    <text evidence="3 4 8 9">Expression of a 9.5 kb p-vac DNA fragment containing 2 divergently transcribed regions (gvpD-gvpE-gvpF-gvpG-gvpH-gvpI-gvpJ-gvpK-gvpL-gvpM and gvpA-gvpC-gvpN-gvpO) allows H.volcanii to produce gas vesicles (PubMed:1404376, PubMed:7651141). A similar region restores gas vesicle production in H.halobium without the p-vac locus, but it still has the c-vac locus (PubMed:1398080, PubMed:8002589).</text>
</comment>
<comment type="activity regulation">
    <text evidence="1">The amount of protein that accumulates is controlled by GvpD; GvpD causes a reduction in the amount of GvpE, preventing accumulation of excessive amounts of gas vesicles.</text>
</comment>
<comment type="subunit">
    <text evidence="1">Interacts with GvpD.</text>
</comment>
<comment type="subcellular location">
    <subcellularLocation>
        <location evidence="12">Cytoplasm</location>
    </subcellularLocation>
    <text evidence="12">Probably not part of the mature gas vesicle.</text>
</comment>
<comment type="induction">
    <text evidence="5 7 8">Maximally transcribed in late log phase, probably part of a gvpD1-gvpE1 operon (PubMed:1956294, PubMed:7651141). Gas vesicles appear earlier when grown in static culture, possibly due to O(2)-limitation (PubMed:33711860).</text>
</comment>
<comment type="disruption phenotype">
    <text evidence="5 6 8 9">Partially gas vesicle-deficient (PubMed:1956294, PubMed:2552415, PubMed:8002589). A single gvpE1 deletion is partially gas vesicle deficient, still transcribes gvpA1. A double gvpD1-gvpE1 deletion is partially gas vesicle-deficient, still transcribes gvpA1 (PubMed:7651141).</text>
</comment>
<comment type="miscellaneous">
    <text evidence="4 5 7">Encoded in a 14-gene plasmid locus called p-vac which produces predominantly short, spindle-shaped gas vesicles during all stages of growth.</text>
</comment>